<dbReference type="EMBL" id="AL513382">
    <property type="protein sequence ID" value="CAD01922.1"/>
    <property type="molecule type" value="Genomic_DNA"/>
</dbReference>
<dbReference type="EMBL" id="AE014613">
    <property type="protein sequence ID" value="AAO68963.1"/>
    <property type="molecule type" value="Genomic_DNA"/>
</dbReference>
<dbReference type="RefSeq" id="NP_456085.1">
    <property type="nucleotide sequence ID" value="NC_003198.1"/>
</dbReference>
<dbReference type="RefSeq" id="WP_000597179.1">
    <property type="nucleotide sequence ID" value="NZ_WSUR01000011.1"/>
</dbReference>
<dbReference type="SMR" id="P0A1X1"/>
<dbReference type="STRING" id="220341.gene:17585612"/>
<dbReference type="KEGG" id="stt:t1313"/>
<dbReference type="KEGG" id="sty:STY1677"/>
<dbReference type="PATRIC" id="fig|220341.7.peg.1687"/>
<dbReference type="eggNOG" id="COG3133">
    <property type="taxonomic scope" value="Bacteria"/>
</dbReference>
<dbReference type="HOGENOM" id="CLU_090265_3_1_6"/>
<dbReference type="OMA" id="IVVVQKY"/>
<dbReference type="OrthoDB" id="5298161at2"/>
<dbReference type="Proteomes" id="UP000000541">
    <property type="component" value="Chromosome"/>
</dbReference>
<dbReference type="Proteomes" id="UP000002670">
    <property type="component" value="Chromosome"/>
</dbReference>
<dbReference type="GO" id="GO:0009279">
    <property type="term" value="C:cell outer membrane"/>
    <property type="evidence" value="ECO:0007669"/>
    <property type="project" value="UniProtKB-SubCell"/>
</dbReference>
<dbReference type="InterPro" id="IPR051407">
    <property type="entry name" value="Bact_OM_lipoprot/Surf_antigen"/>
</dbReference>
<dbReference type="InterPro" id="IPR008816">
    <property type="entry name" value="Gly_zipper_2TM_dom"/>
</dbReference>
<dbReference type="PANTHER" id="PTHR35603">
    <property type="match status" value="1"/>
</dbReference>
<dbReference type="PANTHER" id="PTHR35603:SF1">
    <property type="entry name" value="OUTER MEMBRANE LIPOPROTEIN SLYB"/>
    <property type="match status" value="1"/>
</dbReference>
<dbReference type="Pfam" id="PF05433">
    <property type="entry name" value="Rick_17kDa_Anti"/>
    <property type="match status" value="1"/>
</dbReference>
<dbReference type="PROSITE" id="PS51257">
    <property type="entry name" value="PROKAR_LIPOPROTEIN"/>
    <property type="match status" value="1"/>
</dbReference>
<evidence type="ECO:0000255" key="1">
    <source>
        <dbReference type="PROSITE-ProRule" id="PRU00303"/>
    </source>
</evidence>
<evidence type="ECO:0000305" key="2"/>
<keyword id="KW-0998">Cell outer membrane</keyword>
<keyword id="KW-0449">Lipoprotein</keyword>
<keyword id="KW-0472">Membrane</keyword>
<keyword id="KW-0564">Palmitate</keyword>
<keyword id="KW-0732">Signal</keyword>
<accession>P0A1X1</accession>
<accession>Q53549</accession>
<protein>
    <recommendedName>
        <fullName>Outer membrane lipoprotein SlyB</fullName>
    </recommendedName>
</protein>
<organism>
    <name type="scientific">Salmonella typhi</name>
    <dbReference type="NCBI Taxonomy" id="90370"/>
    <lineage>
        <taxon>Bacteria</taxon>
        <taxon>Pseudomonadati</taxon>
        <taxon>Pseudomonadota</taxon>
        <taxon>Gammaproteobacteria</taxon>
        <taxon>Enterobacterales</taxon>
        <taxon>Enterobacteriaceae</taxon>
        <taxon>Salmonella</taxon>
    </lineage>
</organism>
<comment type="subcellular location">
    <subcellularLocation>
        <location evidence="2">Cell outer membrane</location>
        <topology evidence="1">Lipid-anchor</topology>
    </subcellularLocation>
</comment>
<comment type="similarity">
    <text evidence="2">Belongs to the Pcp/SlyB lipoprotein family.</text>
</comment>
<sequence length="155" mass="15548">MIKRVLAVSLMGLSLAGCVNNDSLSGDVYTASEAKQVQNVTYGTIVNVRPVQIQGGDDSNVIGAIGGAVLGGFLGNTIGGGTGRSLATAAGAVAGGVAGQGVQSAMNKTQGVELEIRKDDGNTIMVVQKQGNTRFSAGQRVVLASNGSQVTVSPR</sequence>
<gene>
    <name type="primary">slyB</name>
    <name type="ordered locus">STY1677</name>
    <name type="ordered locus">t1313</name>
</gene>
<feature type="signal peptide" evidence="1">
    <location>
        <begin position="1"/>
        <end position="17"/>
    </location>
</feature>
<feature type="chain" id="PRO_0000018163" description="Outer membrane lipoprotein SlyB">
    <location>
        <begin position="18"/>
        <end position="155"/>
    </location>
</feature>
<feature type="lipid moiety-binding region" description="N-palmitoyl cysteine" evidence="1">
    <location>
        <position position="18"/>
    </location>
</feature>
<feature type="lipid moiety-binding region" description="S-diacylglycerol cysteine" evidence="1">
    <location>
        <position position="18"/>
    </location>
</feature>
<proteinExistence type="inferred from homology"/>
<name>SLYB_SALTI</name>
<reference key="1">
    <citation type="journal article" date="2001" name="Nature">
        <title>Complete genome sequence of a multiple drug resistant Salmonella enterica serovar Typhi CT18.</title>
        <authorList>
            <person name="Parkhill J."/>
            <person name="Dougan G."/>
            <person name="James K.D."/>
            <person name="Thomson N.R."/>
            <person name="Pickard D."/>
            <person name="Wain J."/>
            <person name="Churcher C.M."/>
            <person name="Mungall K.L."/>
            <person name="Bentley S.D."/>
            <person name="Holden M.T.G."/>
            <person name="Sebaihia M."/>
            <person name="Baker S."/>
            <person name="Basham D."/>
            <person name="Brooks K."/>
            <person name="Chillingworth T."/>
            <person name="Connerton P."/>
            <person name="Cronin A."/>
            <person name="Davis P."/>
            <person name="Davies R.M."/>
            <person name="Dowd L."/>
            <person name="White N."/>
            <person name="Farrar J."/>
            <person name="Feltwell T."/>
            <person name="Hamlin N."/>
            <person name="Haque A."/>
            <person name="Hien T.T."/>
            <person name="Holroyd S."/>
            <person name="Jagels K."/>
            <person name="Krogh A."/>
            <person name="Larsen T.S."/>
            <person name="Leather S."/>
            <person name="Moule S."/>
            <person name="O'Gaora P."/>
            <person name="Parry C."/>
            <person name="Quail M.A."/>
            <person name="Rutherford K.M."/>
            <person name="Simmonds M."/>
            <person name="Skelton J."/>
            <person name="Stevens K."/>
            <person name="Whitehead S."/>
            <person name="Barrell B.G."/>
        </authorList>
    </citation>
    <scope>NUCLEOTIDE SEQUENCE [LARGE SCALE GENOMIC DNA]</scope>
    <source>
        <strain>CT18</strain>
    </source>
</reference>
<reference key="2">
    <citation type="journal article" date="2003" name="J. Bacteriol.">
        <title>Comparative genomics of Salmonella enterica serovar Typhi strains Ty2 and CT18.</title>
        <authorList>
            <person name="Deng W."/>
            <person name="Liou S.-R."/>
            <person name="Plunkett G. III"/>
            <person name="Mayhew G.F."/>
            <person name="Rose D.J."/>
            <person name="Burland V."/>
            <person name="Kodoyianni V."/>
            <person name="Schwartz D.C."/>
            <person name="Blattner F.R."/>
        </authorList>
    </citation>
    <scope>NUCLEOTIDE SEQUENCE [LARGE SCALE GENOMIC DNA]</scope>
    <source>
        <strain>ATCC 700931 / Ty2</strain>
    </source>
</reference>